<gene>
    <name evidence="1" type="primary">rsmG</name>
    <name type="ordered locus">MGAS10750_Spy0273</name>
</gene>
<sequence>MTPQDFYRTLEEDGFSLASKQKEQFDTYFKLLVEWNTKINLTAITEKNEVYLKHFYDSIAPILQGFLANEPIKLLDIGAGAGFPSLPMKILFPNLEVTIIDSLNKRISFLTLLAQELGLENVHFFHGRAEDFGQDKAFRGQFDVVTARAVARMQVLSELTIPFLKIGGKLIALKAQAADQELEEAKNALCLLFGKVIKNHSYQLPNGDSRFITIVEKKKETPNKYPRKAGLPNKKPL</sequence>
<accession>Q1J8D8</accession>
<name>RSMG_STRPF</name>
<proteinExistence type="inferred from homology"/>
<evidence type="ECO:0000255" key="1">
    <source>
        <dbReference type="HAMAP-Rule" id="MF_00074"/>
    </source>
</evidence>
<dbReference type="EC" id="2.1.1.-" evidence="1"/>
<dbReference type="EMBL" id="CP000262">
    <property type="protein sequence ID" value="ABF37223.1"/>
    <property type="molecule type" value="Genomic_DNA"/>
</dbReference>
<dbReference type="SMR" id="Q1J8D8"/>
<dbReference type="KEGG" id="spi:MGAS10750_Spy0273"/>
<dbReference type="HOGENOM" id="CLU_065341_0_2_9"/>
<dbReference type="Proteomes" id="UP000002434">
    <property type="component" value="Chromosome"/>
</dbReference>
<dbReference type="GO" id="GO:0005829">
    <property type="term" value="C:cytosol"/>
    <property type="evidence" value="ECO:0007669"/>
    <property type="project" value="TreeGrafter"/>
</dbReference>
<dbReference type="GO" id="GO:0070043">
    <property type="term" value="F:rRNA (guanine-N7-)-methyltransferase activity"/>
    <property type="evidence" value="ECO:0007669"/>
    <property type="project" value="UniProtKB-UniRule"/>
</dbReference>
<dbReference type="CDD" id="cd02440">
    <property type="entry name" value="AdoMet_MTases"/>
    <property type="match status" value="1"/>
</dbReference>
<dbReference type="FunFam" id="3.40.50.150:FF:000041">
    <property type="entry name" value="Ribosomal RNA small subunit methyltransferase G"/>
    <property type="match status" value="1"/>
</dbReference>
<dbReference type="Gene3D" id="3.40.50.150">
    <property type="entry name" value="Vaccinia Virus protein VP39"/>
    <property type="match status" value="1"/>
</dbReference>
<dbReference type="HAMAP" id="MF_00074">
    <property type="entry name" value="16SrRNA_methyltr_G"/>
    <property type="match status" value="1"/>
</dbReference>
<dbReference type="InterPro" id="IPR003682">
    <property type="entry name" value="rRNA_ssu_MeTfrase_G"/>
</dbReference>
<dbReference type="InterPro" id="IPR029063">
    <property type="entry name" value="SAM-dependent_MTases_sf"/>
</dbReference>
<dbReference type="NCBIfam" id="TIGR00138">
    <property type="entry name" value="rsmG_gidB"/>
    <property type="match status" value="1"/>
</dbReference>
<dbReference type="PANTHER" id="PTHR31760">
    <property type="entry name" value="S-ADENOSYL-L-METHIONINE-DEPENDENT METHYLTRANSFERASES SUPERFAMILY PROTEIN"/>
    <property type="match status" value="1"/>
</dbReference>
<dbReference type="PANTHER" id="PTHR31760:SF0">
    <property type="entry name" value="S-ADENOSYL-L-METHIONINE-DEPENDENT METHYLTRANSFERASES SUPERFAMILY PROTEIN"/>
    <property type="match status" value="1"/>
</dbReference>
<dbReference type="Pfam" id="PF02527">
    <property type="entry name" value="GidB"/>
    <property type="match status" value="1"/>
</dbReference>
<dbReference type="PIRSF" id="PIRSF003078">
    <property type="entry name" value="GidB"/>
    <property type="match status" value="1"/>
</dbReference>
<dbReference type="SUPFAM" id="SSF53335">
    <property type="entry name" value="S-adenosyl-L-methionine-dependent methyltransferases"/>
    <property type="match status" value="1"/>
</dbReference>
<keyword id="KW-0963">Cytoplasm</keyword>
<keyword id="KW-0489">Methyltransferase</keyword>
<keyword id="KW-0698">rRNA processing</keyword>
<keyword id="KW-0949">S-adenosyl-L-methionine</keyword>
<keyword id="KW-0808">Transferase</keyword>
<organism>
    <name type="scientific">Streptococcus pyogenes serotype M4 (strain MGAS10750)</name>
    <dbReference type="NCBI Taxonomy" id="370554"/>
    <lineage>
        <taxon>Bacteria</taxon>
        <taxon>Bacillati</taxon>
        <taxon>Bacillota</taxon>
        <taxon>Bacilli</taxon>
        <taxon>Lactobacillales</taxon>
        <taxon>Streptococcaceae</taxon>
        <taxon>Streptococcus</taxon>
    </lineage>
</organism>
<protein>
    <recommendedName>
        <fullName evidence="1">Ribosomal RNA small subunit methyltransferase G</fullName>
        <ecNumber evidence="1">2.1.1.-</ecNumber>
    </recommendedName>
    <alternativeName>
        <fullName evidence="1">16S rRNA 7-methylguanosine methyltransferase</fullName>
        <shortName evidence="1">16S rRNA m7G methyltransferase</shortName>
    </alternativeName>
</protein>
<reference key="1">
    <citation type="journal article" date="2006" name="Proc. Natl. Acad. Sci. U.S.A.">
        <title>Molecular genetic anatomy of inter- and intraserotype variation in the human bacterial pathogen group A Streptococcus.</title>
        <authorList>
            <person name="Beres S.B."/>
            <person name="Richter E.W."/>
            <person name="Nagiec M.J."/>
            <person name="Sumby P."/>
            <person name="Porcella S.F."/>
            <person name="DeLeo F.R."/>
            <person name="Musser J.M."/>
        </authorList>
    </citation>
    <scope>NUCLEOTIDE SEQUENCE [LARGE SCALE GENOMIC DNA]</scope>
    <source>
        <strain>MGAS10750</strain>
    </source>
</reference>
<comment type="function">
    <text evidence="1">Specifically methylates the N7 position of a guanine in 16S rRNA.</text>
</comment>
<comment type="subcellular location">
    <subcellularLocation>
        <location evidence="1">Cytoplasm</location>
    </subcellularLocation>
</comment>
<comment type="similarity">
    <text evidence="1">Belongs to the methyltransferase superfamily. RNA methyltransferase RsmG family.</text>
</comment>
<feature type="chain" id="PRO_1000010223" description="Ribosomal RNA small subunit methyltransferase G">
    <location>
        <begin position="1"/>
        <end position="237"/>
    </location>
</feature>
<feature type="binding site" evidence="1">
    <location>
        <position position="78"/>
    </location>
    <ligand>
        <name>S-adenosyl-L-methionine</name>
        <dbReference type="ChEBI" id="CHEBI:59789"/>
    </ligand>
</feature>
<feature type="binding site" evidence="1">
    <location>
        <position position="83"/>
    </location>
    <ligand>
        <name>S-adenosyl-L-methionine</name>
        <dbReference type="ChEBI" id="CHEBI:59789"/>
    </ligand>
</feature>
<feature type="binding site" evidence="1">
    <location>
        <begin position="129"/>
        <end position="130"/>
    </location>
    <ligand>
        <name>S-adenosyl-L-methionine</name>
        <dbReference type="ChEBI" id="CHEBI:59789"/>
    </ligand>
</feature>
<feature type="binding site" evidence="1">
    <location>
        <position position="148"/>
    </location>
    <ligand>
        <name>S-adenosyl-L-methionine</name>
        <dbReference type="ChEBI" id="CHEBI:59789"/>
    </ligand>
</feature>